<name>NUSB_DICT6</name>
<reference key="1">
    <citation type="journal article" date="2014" name="Genome Announc.">
        <title>Complete Genome Sequence of the Extreme Thermophile Dictyoglomus thermophilum H-6-12.</title>
        <authorList>
            <person name="Coil D.A."/>
            <person name="Badger J.H."/>
            <person name="Forberger H.C."/>
            <person name="Riggs F."/>
            <person name="Madupu R."/>
            <person name="Fedorova N."/>
            <person name="Ward N."/>
            <person name="Robb F.T."/>
            <person name="Eisen J.A."/>
        </authorList>
    </citation>
    <scope>NUCLEOTIDE SEQUENCE [LARGE SCALE GENOMIC DNA]</scope>
    <source>
        <strain>ATCC 35947 / DSM 3960 / H-6-12</strain>
    </source>
</reference>
<feature type="chain" id="PRO_1000192436" description="Transcription antitermination protein NusB">
    <location>
        <begin position="1"/>
        <end position="144"/>
    </location>
</feature>
<gene>
    <name evidence="1" type="primary">nusB</name>
    <name type="ordered locus">DICTH_0901</name>
</gene>
<comment type="function">
    <text evidence="1">Involved in transcription antitermination. Required for transcription of ribosomal RNA (rRNA) genes. Binds specifically to the boxA antiterminator sequence of the ribosomal RNA (rrn) operons.</text>
</comment>
<comment type="similarity">
    <text evidence="1">Belongs to the NusB family.</text>
</comment>
<sequence>MSKERTRCREKVLQLLFQKDLGQEVEVDFSDFSPQGQAFAYRLYDGALQYKDLADSIISRFSKNWKLERMGALERNILRLAIAEMFTFSDIPQAVTVNEAVELAKKYVSPEAGRFVNGILRNIVRNWEEVKSLKEGFVDVTPEN</sequence>
<organism>
    <name type="scientific">Dictyoglomus thermophilum (strain ATCC 35947 / DSM 3960 / H-6-12)</name>
    <dbReference type="NCBI Taxonomy" id="309799"/>
    <lineage>
        <taxon>Bacteria</taxon>
        <taxon>Pseudomonadati</taxon>
        <taxon>Dictyoglomota</taxon>
        <taxon>Dictyoglomia</taxon>
        <taxon>Dictyoglomales</taxon>
        <taxon>Dictyoglomaceae</taxon>
        <taxon>Dictyoglomus</taxon>
    </lineage>
</organism>
<accession>B5YE05</accession>
<protein>
    <recommendedName>
        <fullName evidence="1">Transcription antitermination protein NusB</fullName>
    </recommendedName>
    <alternativeName>
        <fullName evidence="1">Antitermination factor NusB</fullName>
    </alternativeName>
</protein>
<evidence type="ECO:0000255" key="1">
    <source>
        <dbReference type="HAMAP-Rule" id="MF_00073"/>
    </source>
</evidence>
<proteinExistence type="inferred from homology"/>
<dbReference type="EMBL" id="CP001146">
    <property type="protein sequence ID" value="ACI19213.1"/>
    <property type="molecule type" value="Genomic_DNA"/>
</dbReference>
<dbReference type="RefSeq" id="WP_012547845.1">
    <property type="nucleotide sequence ID" value="NC_011297.1"/>
</dbReference>
<dbReference type="SMR" id="B5YE05"/>
<dbReference type="STRING" id="309799.DICTH_0901"/>
<dbReference type="PaxDb" id="309799-DICTH_0901"/>
<dbReference type="KEGG" id="dth:DICTH_0901"/>
<dbReference type="eggNOG" id="COG0781">
    <property type="taxonomic scope" value="Bacteria"/>
</dbReference>
<dbReference type="HOGENOM" id="CLU_087843_3_3_0"/>
<dbReference type="OrthoDB" id="9811381at2"/>
<dbReference type="Proteomes" id="UP000001733">
    <property type="component" value="Chromosome"/>
</dbReference>
<dbReference type="GO" id="GO:0005829">
    <property type="term" value="C:cytosol"/>
    <property type="evidence" value="ECO:0007669"/>
    <property type="project" value="TreeGrafter"/>
</dbReference>
<dbReference type="GO" id="GO:0003723">
    <property type="term" value="F:RNA binding"/>
    <property type="evidence" value="ECO:0007669"/>
    <property type="project" value="UniProtKB-UniRule"/>
</dbReference>
<dbReference type="GO" id="GO:0006353">
    <property type="term" value="P:DNA-templated transcription termination"/>
    <property type="evidence" value="ECO:0007669"/>
    <property type="project" value="UniProtKB-UniRule"/>
</dbReference>
<dbReference type="GO" id="GO:0031564">
    <property type="term" value="P:transcription antitermination"/>
    <property type="evidence" value="ECO:0007669"/>
    <property type="project" value="UniProtKB-KW"/>
</dbReference>
<dbReference type="Gene3D" id="1.10.940.10">
    <property type="entry name" value="NusB-like"/>
    <property type="match status" value="1"/>
</dbReference>
<dbReference type="HAMAP" id="MF_00073">
    <property type="entry name" value="NusB"/>
    <property type="match status" value="1"/>
</dbReference>
<dbReference type="InterPro" id="IPR035926">
    <property type="entry name" value="NusB-like_sf"/>
</dbReference>
<dbReference type="InterPro" id="IPR011605">
    <property type="entry name" value="NusB_fam"/>
</dbReference>
<dbReference type="InterPro" id="IPR006027">
    <property type="entry name" value="NusB_RsmB_TIM44"/>
</dbReference>
<dbReference type="NCBIfam" id="TIGR01951">
    <property type="entry name" value="nusB"/>
    <property type="match status" value="1"/>
</dbReference>
<dbReference type="PANTHER" id="PTHR11078:SF3">
    <property type="entry name" value="ANTITERMINATION NUSB DOMAIN-CONTAINING PROTEIN"/>
    <property type="match status" value="1"/>
</dbReference>
<dbReference type="PANTHER" id="PTHR11078">
    <property type="entry name" value="N UTILIZATION SUBSTANCE PROTEIN B-RELATED"/>
    <property type="match status" value="1"/>
</dbReference>
<dbReference type="Pfam" id="PF01029">
    <property type="entry name" value="NusB"/>
    <property type="match status" value="1"/>
</dbReference>
<dbReference type="SUPFAM" id="SSF48013">
    <property type="entry name" value="NusB-like"/>
    <property type="match status" value="1"/>
</dbReference>
<keyword id="KW-0694">RNA-binding</keyword>
<keyword id="KW-0804">Transcription</keyword>
<keyword id="KW-0889">Transcription antitermination</keyword>
<keyword id="KW-0805">Transcription regulation</keyword>